<evidence type="ECO:0000255" key="1">
    <source>
        <dbReference type="HAMAP-Rule" id="MF_00251"/>
    </source>
</evidence>
<evidence type="ECO:0000305" key="2"/>
<feature type="chain" id="PRO_0000276837" description="Large ribosomal subunit protein bL36c">
    <location>
        <begin position="1"/>
        <end position="37"/>
    </location>
</feature>
<accession>A1E9V8</accession>
<name>RK36_SORBI</name>
<reference key="1">
    <citation type="journal article" date="2007" name="Theor. Appl. Genet.">
        <title>Complete chloroplast genome sequences of Hordeum vulgare, Sorghum bicolor and Agrostis stolonifera, and comparative analyses with other grass genomes.</title>
        <authorList>
            <person name="Saski C."/>
            <person name="Lee S.-B."/>
            <person name="Fjellheim S."/>
            <person name="Guda C."/>
            <person name="Jansen R.K."/>
            <person name="Luo H."/>
            <person name="Tomkins J."/>
            <person name="Rognli O.A."/>
            <person name="Daniell H."/>
            <person name="Clarke J.L."/>
        </authorList>
    </citation>
    <scope>NUCLEOTIDE SEQUENCE [LARGE SCALE GENOMIC DNA]</scope>
    <source>
        <strain>cv. BTx623</strain>
    </source>
</reference>
<dbReference type="EMBL" id="EF115542">
    <property type="protein sequence ID" value="ABK79529.1"/>
    <property type="molecule type" value="Genomic_DNA"/>
</dbReference>
<dbReference type="RefSeq" id="YP_899441.1">
    <property type="nucleotide sequence ID" value="NC_008602.1"/>
</dbReference>
<dbReference type="SMR" id="A1E9V8"/>
<dbReference type="FunCoup" id="A1E9V8">
    <property type="interactions" value="23"/>
</dbReference>
<dbReference type="STRING" id="4558.A1E9V8"/>
<dbReference type="GeneID" id="4549085"/>
<dbReference type="KEGG" id="sbi:4549085"/>
<dbReference type="InParanoid" id="A1E9V8"/>
<dbReference type="Proteomes" id="UP000000768">
    <property type="component" value="Chloroplast"/>
</dbReference>
<dbReference type="GO" id="GO:0009507">
    <property type="term" value="C:chloroplast"/>
    <property type="evidence" value="ECO:0007669"/>
    <property type="project" value="UniProtKB-SubCell"/>
</dbReference>
<dbReference type="GO" id="GO:1990904">
    <property type="term" value="C:ribonucleoprotein complex"/>
    <property type="evidence" value="ECO:0007669"/>
    <property type="project" value="UniProtKB-KW"/>
</dbReference>
<dbReference type="GO" id="GO:0005840">
    <property type="term" value="C:ribosome"/>
    <property type="evidence" value="ECO:0007669"/>
    <property type="project" value="UniProtKB-KW"/>
</dbReference>
<dbReference type="GO" id="GO:0003735">
    <property type="term" value="F:structural constituent of ribosome"/>
    <property type="evidence" value="ECO:0007669"/>
    <property type="project" value="InterPro"/>
</dbReference>
<dbReference type="GO" id="GO:0006412">
    <property type="term" value="P:translation"/>
    <property type="evidence" value="ECO:0007669"/>
    <property type="project" value="UniProtKB-UniRule"/>
</dbReference>
<dbReference type="HAMAP" id="MF_00251">
    <property type="entry name" value="Ribosomal_bL36"/>
    <property type="match status" value="1"/>
</dbReference>
<dbReference type="InterPro" id="IPR000473">
    <property type="entry name" value="Ribosomal_bL36"/>
</dbReference>
<dbReference type="InterPro" id="IPR035977">
    <property type="entry name" value="Ribosomal_bL36_sp"/>
</dbReference>
<dbReference type="NCBIfam" id="TIGR01022">
    <property type="entry name" value="rpmJ_bact"/>
    <property type="match status" value="1"/>
</dbReference>
<dbReference type="PANTHER" id="PTHR42888">
    <property type="entry name" value="50S RIBOSOMAL PROTEIN L36, CHLOROPLASTIC"/>
    <property type="match status" value="1"/>
</dbReference>
<dbReference type="PANTHER" id="PTHR42888:SF1">
    <property type="entry name" value="LARGE RIBOSOMAL SUBUNIT PROTEIN BL36C"/>
    <property type="match status" value="1"/>
</dbReference>
<dbReference type="Pfam" id="PF00444">
    <property type="entry name" value="Ribosomal_L36"/>
    <property type="match status" value="1"/>
</dbReference>
<dbReference type="SUPFAM" id="SSF57840">
    <property type="entry name" value="Ribosomal protein L36"/>
    <property type="match status" value="1"/>
</dbReference>
<dbReference type="PROSITE" id="PS00828">
    <property type="entry name" value="RIBOSOMAL_L36"/>
    <property type="match status" value="1"/>
</dbReference>
<sequence length="37" mass="4447">MKIRASVRKICTKCRLIRRRGRIRVICSNPKHKQRQG</sequence>
<proteinExistence type="inferred from homology"/>
<geneLocation type="chloroplast"/>
<comment type="subcellular location">
    <subcellularLocation>
        <location>Plastid</location>
        <location>Chloroplast</location>
    </subcellularLocation>
</comment>
<comment type="similarity">
    <text evidence="1">Belongs to the bacterial ribosomal protein bL36 family.</text>
</comment>
<gene>
    <name evidence="1" type="primary">rpl36</name>
</gene>
<organism>
    <name type="scientific">Sorghum bicolor</name>
    <name type="common">Sorghum</name>
    <name type="synonym">Sorghum vulgare</name>
    <dbReference type="NCBI Taxonomy" id="4558"/>
    <lineage>
        <taxon>Eukaryota</taxon>
        <taxon>Viridiplantae</taxon>
        <taxon>Streptophyta</taxon>
        <taxon>Embryophyta</taxon>
        <taxon>Tracheophyta</taxon>
        <taxon>Spermatophyta</taxon>
        <taxon>Magnoliopsida</taxon>
        <taxon>Liliopsida</taxon>
        <taxon>Poales</taxon>
        <taxon>Poaceae</taxon>
        <taxon>PACMAD clade</taxon>
        <taxon>Panicoideae</taxon>
        <taxon>Andropogonodae</taxon>
        <taxon>Andropogoneae</taxon>
        <taxon>Sorghinae</taxon>
        <taxon>Sorghum</taxon>
    </lineage>
</organism>
<keyword id="KW-0150">Chloroplast</keyword>
<keyword id="KW-0934">Plastid</keyword>
<keyword id="KW-1185">Reference proteome</keyword>
<keyword id="KW-0687">Ribonucleoprotein</keyword>
<keyword id="KW-0689">Ribosomal protein</keyword>
<protein>
    <recommendedName>
        <fullName evidence="1">Large ribosomal subunit protein bL36c</fullName>
    </recommendedName>
    <alternativeName>
        <fullName evidence="2">50S ribosomal protein L36, chloroplastic</fullName>
    </alternativeName>
</protein>